<name>ARAG_ECO57</name>
<keyword id="KW-0067">ATP-binding</keyword>
<keyword id="KW-0997">Cell inner membrane</keyword>
<keyword id="KW-1003">Cell membrane</keyword>
<keyword id="KW-0472">Membrane</keyword>
<keyword id="KW-0547">Nucleotide-binding</keyword>
<keyword id="KW-1185">Reference proteome</keyword>
<keyword id="KW-0677">Repeat</keyword>
<keyword id="KW-0762">Sugar transport</keyword>
<keyword id="KW-1278">Translocase</keyword>
<keyword id="KW-0813">Transport</keyword>
<comment type="function">
    <text evidence="1">Part of the ABC transporter complex AraFGH involved in arabinose import. Responsible for energy coupling to the transport system.</text>
</comment>
<comment type="catalytic activity">
    <reaction evidence="1">
        <text>L-arabinose(out) + ATP + H2O = L-arabinose(in) + ADP + phosphate + H(+)</text>
        <dbReference type="Rhea" id="RHEA:30007"/>
        <dbReference type="ChEBI" id="CHEBI:15377"/>
        <dbReference type="ChEBI" id="CHEBI:15378"/>
        <dbReference type="ChEBI" id="CHEBI:17535"/>
        <dbReference type="ChEBI" id="CHEBI:30616"/>
        <dbReference type="ChEBI" id="CHEBI:43474"/>
        <dbReference type="ChEBI" id="CHEBI:456216"/>
        <dbReference type="EC" id="7.5.2.12"/>
    </reaction>
</comment>
<comment type="subunit">
    <text evidence="1">The complex is composed of two ATP-binding proteins (AraG), two transmembrane proteins (AraH) and a solute-binding protein (AraF).</text>
</comment>
<comment type="subcellular location">
    <subcellularLocation>
        <location evidence="1">Cell inner membrane</location>
        <topology evidence="1">Peripheral membrane protein</topology>
    </subcellularLocation>
</comment>
<comment type="similarity">
    <text evidence="1">Belongs to the ABC transporter superfamily. Arabinose importer (TC 3.A.1.2.2) family.</text>
</comment>
<organism>
    <name type="scientific">Escherichia coli O157:H7</name>
    <dbReference type="NCBI Taxonomy" id="83334"/>
    <lineage>
        <taxon>Bacteria</taxon>
        <taxon>Pseudomonadati</taxon>
        <taxon>Pseudomonadota</taxon>
        <taxon>Gammaproteobacteria</taxon>
        <taxon>Enterobacterales</taxon>
        <taxon>Enterobacteriaceae</taxon>
        <taxon>Escherichia</taxon>
    </lineage>
</organism>
<gene>
    <name evidence="1" type="primary">araG</name>
    <name type="ordered locus">Z2953</name>
    <name type="ordered locus">ECs2608</name>
</gene>
<evidence type="ECO:0000255" key="1">
    <source>
        <dbReference type="HAMAP-Rule" id="MF_01721"/>
    </source>
</evidence>
<evidence type="ECO:0000305" key="2"/>
<accession>P0AAF5</accession>
<accession>P08531</accession>
<feature type="chain" id="PRO_0000091937" description="Arabinose import ATP-binding protein AraG">
    <location>
        <begin position="1"/>
        <end position="504"/>
    </location>
</feature>
<feature type="domain" description="ABC transporter 1" evidence="1">
    <location>
        <begin position="8"/>
        <end position="243"/>
    </location>
</feature>
<feature type="domain" description="ABC transporter 2" evidence="1">
    <location>
        <begin position="256"/>
        <end position="499"/>
    </location>
</feature>
<feature type="binding site" evidence="1">
    <location>
        <begin position="40"/>
        <end position="47"/>
    </location>
    <ligand>
        <name>ATP</name>
        <dbReference type="ChEBI" id="CHEBI:30616"/>
    </ligand>
</feature>
<feature type="sequence conflict" description="In Ref. 1; AAG56889." evidence="2" ref="1">
    <original>R</original>
    <variation>C</variation>
    <location>
        <position position="187"/>
    </location>
</feature>
<proteinExistence type="inferred from homology"/>
<dbReference type="EC" id="7.5.2.12" evidence="1"/>
<dbReference type="EMBL" id="AE005174">
    <property type="protein sequence ID" value="AAG56889.1"/>
    <property type="molecule type" value="Genomic_DNA"/>
</dbReference>
<dbReference type="EMBL" id="BA000007">
    <property type="protein sequence ID" value="BAB36031.1"/>
    <property type="molecule type" value="Genomic_DNA"/>
</dbReference>
<dbReference type="PIR" id="E85803">
    <property type="entry name" value="E85803"/>
</dbReference>
<dbReference type="PIR" id="H90954">
    <property type="entry name" value="H90954"/>
</dbReference>
<dbReference type="RefSeq" id="NP_310635.1">
    <property type="nucleotide sequence ID" value="NC_002695.1"/>
</dbReference>
<dbReference type="RefSeq" id="WP_001187796.1">
    <property type="nucleotide sequence ID" value="NZ_LPWC02000002.1"/>
</dbReference>
<dbReference type="RefSeq" id="WP_001187819.1">
    <property type="nucleotide sequence ID" value="NZ_VOAI01000010.1"/>
</dbReference>
<dbReference type="SMR" id="P0AAF5"/>
<dbReference type="STRING" id="155864.Z2953"/>
<dbReference type="GeneID" id="75171970"/>
<dbReference type="GeneID" id="913724"/>
<dbReference type="KEGG" id="ece:Z2953"/>
<dbReference type="KEGG" id="ecs:ECs_2608"/>
<dbReference type="PATRIC" id="fig|386585.9.peg.2734"/>
<dbReference type="eggNOG" id="COG1129">
    <property type="taxonomic scope" value="Bacteria"/>
</dbReference>
<dbReference type="HOGENOM" id="CLU_000604_92_3_6"/>
<dbReference type="OMA" id="NVHLGHE"/>
<dbReference type="Proteomes" id="UP000000558">
    <property type="component" value="Chromosome"/>
</dbReference>
<dbReference type="Proteomes" id="UP000002519">
    <property type="component" value="Chromosome"/>
</dbReference>
<dbReference type="GO" id="GO:0005886">
    <property type="term" value="C:plasma membrane"/>
    <property type="evidence" value="ECO:0007669"/>
    <property type="project" value="UniProtKB-SubCell"/>
</dbReference>
<dbReference type="GO" id="GO:0015612">
    <property type="term" value="F:ABC-type L-arabinose transporter activity"/>
    <property type="evidence" value="ECO:0007669"/>
    <property type="project" value="UniProtKB-EC"/>
</dbReference>
<dbReference type="GO" id="GO:0005524">
    <property type="term" value="F:ATP binding"/>
    <property type="evidence" value="ECO:0007669"/>
    <property type="project" value="UniProtKB-KW"/>
</dbReference>
<dbReference type="GO" id="GO:0016887">
    <property type="term" value="F:ATP hydrolysis activity"/>
    <property type="evidence" value="ECO:0007669"/>
    <property type="project" value="InterPro"/>
</dbReference>
<dbReference type="CDD" id="cd03216">
    <property type="entry name" value="ABC_Carb_Monos_I"/>
    <property type="match status" value="1"/>
</dbReference>
<dbReference type="CDD" id="cd03215">
    <property type="entry name" value="ABC_Carb_Monos_II"/>
    <property type="match status" value="1"/>
</dbReference>
<dbReference type="FunFam" id="3.40.50.300:FF:000126">
    <property type="entry name" value="Galactose/methyl galactoside import ATP-binding protein MglA"/>
    <property type="match status" value="1"/>
</dbReference>
<dbReference type="FunFam" id="3.40.50.300:FF:000127">
    <property type="entry name" value="Ribose import ATP-binding protein RbsA"/>
    <property type="match status" value="1"/>
</dbReference>
<dbReference type="Gene3D" id="3.40.50.300">
    <property type="entry name" value="P-loop containing nucleotide triphosphate hydrolases"/>
    <property type="match status" value="2"/>
</dbReference>
<dbReference type="InterPro" id="IPR003593">
    <property type="entry name" value="AAA+_ATPase"/>
</dbReference>
<dbReference type="InterPro" id="IPR050107">
    <property type="entry name" value="ABC_carbohydrate_import_ATPase"/>
</dbReference>
<dbReference type="InterPro" id="IPR003439">
    <property type="entry name" value="ABC_transporter-like_ATP-bd"/>
</dbReference>
<dbReference type="InterPro" id="IPR017871">
    <property type="entry name" value="ABC_transporter-like_CS"/>
</dbReference>
<dbReference type="InterPro" id="IPR027417">
    <property type="entry name" value="P-loop_NTPase"/>
</dbReference>
<dbReference type="NCBIfam" id="NF008442">
    <property type="entry name" value="PRK11288.1"/>
    <property type="match status" value="1"/>
</dbReference>
<dbReference type="PANTHER" id="PTHR43790:SF6">
    <property type="entry name" value="ARABINOSE IMPORT ATP-BINDING PROTEIN ARAG"/>
    <property type="match status" value="1"/>
</dbReference>
<dbReference type="PANTHER" id="PTHR43790">
    <property type="entry name" value="CARBOHYDRATE TRANSPORT ATP-BINDING PROTEIN MG119-RELATED"/>
    <property type="match status" value="1"/>
</dbReference>
<dbReference type="Pfam" id="PF00005">
    <property type="entry name" value="ABC_tran"/>
    <property type="match status" value="2"/>
</dbReference>
<dbReference type="SMART" id="SM00382">
    <property type="entry name" value="AAA"/>
    <property type="match status" value="2"/>
</dbReference>
<dbReference type="SUPFAM" id="SSF52540">
    <property type="entry name" value="P-loop containing nucleoside triphosphate hydrolases"/>
    <property type="match status" value="2"/>
</dbReference>
<dbReference type="PROSITE" id="PS00211">
    <property type="entry name" value="ABC_TRANSPORTER_1"/>
    <property type="match status" value="1"/>
</dbReference>
<dbReference type="PROSITE" id="PS50893">
    <property type="entry name" value="ABC_TRANSPORTER_2"/>
    <property type="match status" value="2"/>
</dbReference>
<dbReference type="PROSITE" id="PS51268">
    <property type="entry name" value="ARAG"/>
    <property type="match status" value="1"/>
</dbReference>
<sequence>MQQSTPYLSFRGIGKTFPGVKALTDISFDCYAGQVHALMGENGAGKSTLLKILSGNYAPTTGSVVINGQEMSFSDTTAALNAGVAIIYQELHLVPEMTVAENIYLGQLPHKGGIVNRSLLNYEAGLQLKHLGMDIDPDTPLKYLSIGQWQMVEIAKALARNAKIIAFDEPTSSLSAREIDNLFRVIRELRKEGRVILYVSHRMEEIFALSDAITVFKDGRYVKTFTDMQQVDHDALVQAMVGRDIGDIYGWQPRSYGEERLRLDAVKAPGVRTPISLAVRSGEIVGLFGLVGAGRSELMKGMFGGTQITAGQVYIDQQPIDIRKPSHAIAAGMMLCPEDRKAEGIIPVHSVRDNINISARRKHVLGGCVINNGWEENNADHHIRSLNIKTPGAEQLIMNLSGGNQQKAILGRWLSEEMKVILLDEPTRGIDVGAKHEIYNVIYALAAQGVAVLFASSDLPEVLGVADRIVVMREGEIAGELLHEQADERQALSLAMPKVSQAVA</sequence>
<reference key="1">
    <citation type="journal article" date="2001" name="Nature">
        <title>Genome sequence of enterohaemorrhagic Escherichia coli O157:H7.</title>
        <authorList>
            <person name="Perna N.T."/>
            <person name="Plunkett G. III"/>
            <person name="Burland V."/>
            <person name="Mau B."/>
            <person name="Glasner J.D."/>
            <person name="Rose D.J."/>
            <person name="Mayhew G.F."/>
            <person name="Evans P.S."/>
            <person name="Gregor J."/>
            <person name="Kirkpatrick H.A."/>
            <person name="Posfai G."/>
            <person name="Hackett J."/>
            <person name="Klink S."/>
            <person name="Boutin A."/>
            <person name="Shao Y."/>
            <person name="Miller L."/>
            <person name="Grotbeck E.J."/>
            <person name="Davis N.W."/>
            <person name="Lim A."/>
            <person name="Dimalanta E.T."/>
            <person name="Potamousis K."/>
            <person name="Apodaca J."/>
            <person name="Anantharaman T.S."/>
            <person name="Lin J."/>
            <person name="Yen G."/>
            <person name="Schwartz D.C."/>
            <person name="Welch R.A."/>
            <person name="Blattner F.R."/>
        </authorList>
    </citation>
    <scope>NUCLEOTIDE SEQUENCE [LARGE SCALE GENOMIC DNA]</scope>
    <source>
        <strain>O157:H7 / EDL933 / ATCC 700927 / EHEC</strain>
    </source>
</reference>
<reference key="2">
    <citation type="journal article" date="2001" name="DNA Res.">
        <title>Complete genome sequence of enterohemorrhagic Escherichia coli O157:H7 and genomic comparison with a laboratory strain K-12.</title>
        <authorList>
            <person name="Hayashi T."/>
            <person name="Makino K."/>
            <person name="Ohnishi M."/>
            <person name="Kurokawa K."/>
            <person name="Ishii K."/>
            <person name="Yokoyama K."/>
            <person name="Han C.-G."/>
            <person name="Ohtsubo E."/>
            <person name="Nakayama K."/>
            <person name="Murata T."/>
            <person name="Tanaka M."/>
            <person name="Tobe T."/>
            <person name="Iida T."/>
            <person name="Takami H."/>
            <person name="Honda T."/>
            <person name="Sasakawa C."/>
            <person name="Ogasawara N."/>
            <person name="Yasunaga T."/>
            <person name="Kuhara S."/>
            <person name="Shiba T."/>
            <person name="Hattori M."/>
            <person name="Shinagawa H."/>
        </authorList>
    </citation>
    <scope>NUCLEOTIDE SEQUENCE [LARGE SCALE GENOMIC DNA]</scope>
    <source>
        <strain>O157:H7 / Sakai / RIMD 0509952 / EHEC</strain>
    </source>
</reference>
<protein>
    <recommendedName>
        <fullName evidence="1">Arabinose import ATP-binding protein AraG</fullName>
        <ecNumber evidence="1">7.5.2.12</ecNumber>
    </recommendedName>
</protein>